<proteinExistence type="inferred from homology"/>
<feature type="chain" id="PRO_0000373073" description="DNA polymerase beta">
    <location>
        <begin position="1"/>
        <end position="1196"/>
    </location>
</feature>
<keyword id="KW-0235">DNA replication</keyword>
<keyword id="KW-0238">DNA-binding</keyword>
<keyword id="KW-0239">DNA-directed DNA polymerase</keyword>
<keyword id="KW-0548">Nucleotidyltransferase</keyword>
<keyword id="KW-0808">Transferase</keyword>
<keyword id="KW-1194">Viral DNA replication</keyword>
<name>DPOL_ASFK5</name>
<dbReference type="EC" id="2.7.7.7" evidence="2"/>
<dbReference type="EMBL" id="AY261360">
    <property type="status" value="NOT_ANNOTATED_CDS"/>
    <property type="molecule type" value="Genomic_DNA"/>
</dbReference>
<dbReference type="SMR" id="P0C974"/>
<dbReference type="Proteomes" id="UP000000861">
    <property type="component" value="Segment"/>
</dbReference>
<dbReference type="GO" id="GO:0003677">
    <property type="term" value="F:DNA binding"/>
    <property type="evidence" value="ECO:0007669"/>
    <property type="project" value="UniProtKB-KW"/>
</dbReference>
<dbReference type="GO" id="GO:0003887">
    <property type="term" value="F:DNA-directed DNA polymerase activity"/>
    <property type="evidence" value="ECO:0007669"/>
    <property type="project" value="UniProtKB-KW"/>
</dbReference>
<dbReference type="GO" id="GO:0000166">
    <property type="term" value="F:nucleotide binding"/>
    <property type="evidence" value="ECO:0007669"/>
    <property type="project" value="InterPro"/>
</dbReference>
<dbReference type="GO" id="GO:0006261">
    <property type="term" value="P:DNA-templated DNA replication"/>
    <property type="evidence" value="ECO:0007669"/>
    <property type="project" value="TreeGrafter"/>
</dbReference>
<dbReference type="GO" id="GO:0039693">
    <property type="term" value="P:viral DNA genome replication"/>
    <property type="evidence" value="ECO:0007669"/>
    <property type="project" value="UniProtKB-KW"/>
</dbReference>
<dbReference type="Gene3D" id="1.10.132.60">
    <property type="entry name" value="DNA polymerase family B, C-terminal domain"/>
    <property type="match status" value="1"/>
</dbReference>
<dbReference type="Gene3D" id="1.10.287.690">
    <property type="entry name" value="Helix hairpin bin"/>
    <property type="match status" value="1"/>
</dbReference>
<dbReference type="Gene3D" id="3.90.1600.10">
    <property type="entry name" value="Palm domain of DNA polymerase"/>
    <property type="match status" value="1"/>
</dbReference>
<dbReference type="Gene3D" id="3.30.420.10">
    <property type="entry name" value="Ribonuclease H-like superfamily/Ribonuclease H"/>
    <property type="match status" value="1"/>
</dbReference>
<dbReference type="InterPro" id="IPR006172">
    <property type="entry name" value="DNA-dir_DNA_pol_B"/>
</dbReference>
<dbReference type="InterPro" id="IPR017964">
    <property type="entry name" value="DNA-dir_DNA_pol_B_CS"/>
</dbReference>
<dbReference type="InterPro" id="IPR006133">
    <property type="entry name" value="DNA-dir_DNA_pol_B_exonuc"/>
</dbReference>
<dbReference type="InterPro" id="IPR006134">
    <property type="entry name" value="DNA-dir_DNA_pol_B_multi_dom"/>
</dbReference>
<dbReference type="InterPro" id="IPR043502">
    <property type="entry name" value="DNA/RNA_pol_sf"/>
</dbReference>
<dbReference type="InterPro" id="IPR042087">
    <property type="entry name" value="DNA_pol_B_thumb"/>
</dbReference>
<dbReference type="InterPro" id="IPR023211">
    <property type="entry name" value="DNA_pol_palm_dom_sf"/>
</dbReference>
<dbReference type="InterPro" id="IPR050240">
    <property type="entry name" value="DNA_pol_type-B"/>
</dbReference>
<dbReference type="InterPro" id="IPR012337">
    <property type="entry name" value="RNaseH-like_sf"/>
</dbReference>
<dbReference type="InterPro" id="IPR036397">
    <property type="entry name" value="RNaseH_sf"/>
</dbReference>
<dbReference type="PANTHER" id="PTHR10322">
    <property type="entry name" value="DNA POLYMERASE CATALYTIC SUBUNIT"/>
    <property type="match status" value="1"/>
</dbReference>
<dbReference type="PANTHER" id="PTHR10322:SF23">
    <property type="entry name" value="DNA POLYMERASE DELTA CATALYTIC SUBUNIT"/>
    <property type="match status" value="1"/>
</dbReference>
<dbReference type="Pfam" id="PF00136">
    <property type="entry name" value="DNA_pol_B"/>
    <property type="match status" value="2"/>
</dbReference>
<dbReference type="Pfam" id="PF03104">
    <property type="entry name" value="DNA_pol_B_exo1"/>
    <property type="match status" value="1"/>
</dbReference>
<dbReference type="PRINTS" id="PR00106">
    <property type="entry name" value="DNAPOLB"/>
</dbReference>
<dbReference type="SMART" id="SM00486">
    <property type="entry name" value="POLBc"/>
    <property type="match status" value="1"/>
</dbReference>
<dbReference type="SUPFAM" id="SSF56672">
    <property type="entry name" value="DNA/RNA polymerases"/>
    <property type="match status" value="1"/>
</dbReference>
<dbReference type="SUPFAM" id="SSF53098">
    <property type="entry name" value="Ribonuclease H-like"/>
    <property type="match status" value="1"/>
</dbReference>
<dbReference type="PROSITE" id="PS00116">
    <property type="entry name" value="DNA_POLYMERASE_B"/>
    <property type="match status" value="1"/>
</dbReference>
<organism>
    <name type="scientific">African swine fever virus (isolate Pig/Kenya/KEN-50/1950)</name>
    <name type="common">ASFV</name>
    <dbReference type="NCBI Taxonomy" id="561445"/>
    <lineage>
        <taxon>Viruses</taxon>
        <taxon>Varidnaviria</taxon>
        <taxon>Bamfordvirae</taxon>
        <taxon>Nucleocytoviricota</taxon>
        <taxon>Pokkesviricetes</taxon>
        <taxon>Asfuvirales</taxon>
        <taxon>Asfarviridae</taxon>
        <taxon>Asfivirus</taxon>
        <taxon>African swine fever virus</taxon>
    </lineage>
</organism>
<evidence type="ECO:0000250" key="1"/>
<evidence type="ECO:0000250" key="2">
    <source>
        <dbReference type="UniProtKB" id="P42489"/>
    </source>
</evidence>
<evidence type="ECO:0000305" key="3"/>
<sequence length="1196" mass="138462">MDRSEIVARENPVITQRVTNLLRTNAPLLFMPIDIHEVRYGAYMLFMYGSLENGYKAEVRIENIPVFFDVQIESDNTNQLFLKSLLAAENITYERLETLTQRPVMGYREKEKEFAPYIRIFFKSLYERRKAITYLNNMGYNTAADDTTCYYRMVSRELKLPLTSWIQLQHYSYEPRGLVHRFSVTPEDLVSYQDDGPTDHSIVMAYDIETYSPVKGTVPDPNQANDVVFMICMRIFWIHSTEPLASTCITMAPCKKSPEWTTIVCSSEKNLLLSFAEQFSRWAPDICTGFNDSRYDWPFIVEKSMQHDILEEVFNKMSLFWPQKLDTILKCYYVKEKRVKISAEKSIISSFLHTPGCLPMDVRNMCMQLYPKAEKTSLKAFLENCGLDSKVDLPYHLMWKYYETRDSEKMADVAYYCIIDAQRCQDLLVRHNVIPDRREVGILSYTSLYDCIYYAGGHKVCNMLIAYAIHDEYGRIACSTIARGKREHGKYPGAFVIDPVKGLEQDKPTTGLDFASLYPSLIMAYNFSPEKFVASRDEANSLMAKGESLHYVSFHFNNRLVEGWFVRHNNVPDKMGLYPKVLIDLLNKRTALKQELKKLGEKKECIHESHPGFKELQFRHAMVDAKQKALKIFMNTFYGEAGNNLSPFFLLPLAGGVTSSGQYNLKLVYNFVINKGYGIKYGDTDSLYITCPDSLYTEVTDAYLNSQKTIKHYEQLCHEKVLLSMKAMSTLCAEVNEYLRQDNGTSYLRMAYEEVLFPVCFTGKKKYYGIAHVNTPNFNTKELFIRGIDIIKQGQTKLTKTIGTRIMEESMKLRRPEDHRPPLIEIVKTVLKDAVVNMKQWNFEDFIQTDAWRPDKDNKAVQIFMSRMHARREQLKKHGAAATSQFAEPEPGERFSYVIVEKQVQFDIQGHRTDTTRKGDKMEYVSEAKAKNLPIDILFYINNYVLGLCARFINENEEFQPPGNVSNKDEYAQRRAKSYLQKFVQSIHPKDKSVIKQGIVHRQCYKYVHQEIKKKIGIFADLYKEFFNNTTNPIESFIQSTQFMIHYFDEEQKVNHSMKKMVEQHAALAGNPAGNALMRAIFTQLIVEEKKIVQALYNKGDEIHDLLTYIINNINYKIATFQTKQMLTFELSSTHVELLLKLNKTWLILVGIHVAKKHLHVLLGLSNNEPPSKTFIQQAIEEECGSIKPSCYDFIS</sequence>
<accession>P0C974</accession>
<protein>
    <recommendedName>
        <fullName>DNA polymerase beta</fullName>
        <ecNumber evidence="2">2.7.7.7</ecNumber>
    </recommendedName>
</protein>
<organismHost>
    <name type="scientific">Ornithodoros</name>
    <name type="common">relapsing fever ticks</name>
    <dbReference type="NCBI Taxonomy" id="6937"/>
</organismHost>
<organismHost>
    <name type="scientific">Phacochoerus aethiopicus</name>
    <name type="common">Warthog</name>
    <dbReference type="NCBI Taxonomy" id="85517"/>
</organismHost>
<organismHost>
    <name type="scientific">Phacochoerus africanus</name>
    <name type="common">Warthog</name>
    <dbReference type="NCBI Taxonomy" id="41426"/>
</organismHost>
<organismHost>
    <name type="scientific">Potamochoerus larvatus</name>
    <name type="common">Bushpig</name>
    <dbReference type="NCBI Taxonomy" id="273792"/>
</organismHost>
<organismHost>
    <name type="scientific">Sus scrofa</name>
    <name type="common">Pig</name>
    <dbReference type="NCBI Taxonomy" id="9823"/>
</organismHost>
<reference key="1">
    <citation type="submission" date="2003-03" db="EMBL/GenBank/DDBJ databases">
        <title>African swine fever virus genomes.</title>
        <authorList>
            <person name="Kutish G.F."/>
            <person name="Rock D.L."/>
        </authorList>
    </citation>
    <scope>NUCLEOTIDE SEQUENCE [LARGE SCALE GENOMIC DNA]</scope>
</reference>
<comment type="function">
    <text evidence="1">DNA-directed DNA polymerase involved in viral DNA replication.</text>
</comment>
<comment type="catalytic activity">
    <reaction>
        <text>DNA(n) + a 2'-deoxyribonucleoside 5'-triphosphate = DNA(n+1) + diphosphate</text>
        <dbReference type="Rhea" id="RHEA:22508"/>
        <dbReference type="Rhea" id="RHEA-COMP:17339"/>
        <dbReference type="Rhea" id="RHEA-COMP:17340"/>
        <dbReference type="ChEBI" id="CHEBI:33019"/>
        <dbReference type="ChEBI" id="CHEBI:61560"/>
        <dbReference type="ChEBI" id="CHEBI:173112"/>
        <dbReference type="EC" id="2.7.7.7"/>
    </reaction>
</comment>
<comment type="induction">
    <text evidence="3">Expressed in the early phase of the viral replicative cycle.</text>
</comment>
<comment type="miscellaneous">
    <text>Consistent with its intracellular location, ASFV encodes its own replicative DNA polymerase and three base excision repair enzymes: a class II AP endonuclease, the repair polymerase Pol X, and an ATP-dependent DNA ligase.</text>
</comment>
<comment type="similarity">
    <text evidence="3">Belongs to the DNA polymerase type-B family.</text>
</comment>
<gene>
    <name type="ordered locus">Ken-102</name>
</gene>